<protein>
    <recommendedName>
        <fullName evidence="1">2-isopropylmalate synthase</fullName>
        <ecNumber evidence="1">2.3.3.13</ecNumber>
    </recommendedName>
    <alternativeName>
        <fullName evidence="1">Alpha-IPM synthase</fullName>
    </alternativeName>
    <alternativeName>
        <fullName evidence="1">Alpha-isopropylmalate synthase</fullName>
    </alternativeName>
</protein>
<gene>
    <name evidence="1" type="primary">leuA</name>
    <name type="ordered locus">Reut_A0953</name>
</gene>
<keyword id="KW-0028">Amino-acid biosynthesis</keyword>
<keyword id="KW-0100">Branched-chain amino acid biosynthesis</keyword>
<keyword id="KW-0963">Cytoplasm</keyword>
<keyword id="KW-0432">Leucine biosynthesis</keyword>
<keyword id="KW-0464">Manganese</keyword>
<keyword id="KW-0479">Metal-binding</keyword>
<keyword id="KW-0808">Transferase</keyword>
<sequence length="513" mass="55696">MSDKLIIFDTTLRDGEQSPGASMTREEKIRIAKQLERLKVDVIEAGFAASSNGDYEAIRSIAQVVKDSTICSLARANDKDIARAAEALKPANSFRIHTFIATSALHMEKKLRMTPDQVYEQARLAVRFARQFTDDIEFSPEDGSRSDMDFLCRVLEGVIAEGATTINLPDTVGYAVPEGYADLIRSVRERIPNSDKAVWSVHCHNDLGMAVANSLAAVKLGGARQIECTINGLGERAGNTSLEEVVMAVKTRRDYFNLDVGVDTSQIVPASKLVSQITGFVVQPNKAVVGANAFAHASGIHQDGVLKARDTYEIMRAEDVGWTANKIVLGKLSGRNAFKQRLQELGVELESEAEVNAAFGRFKELADQKAEIFDEDIMAIVSNEAQHDANEHYRFISLSQRSETGERPHARVVFNMDGQEHSGEGEGNGPVDATLHAIESQVNSGAEMVLYSVNAITGGTEAQGEVTVRLSKAGRIVNGVGTDPDIVAASAKAYLAALNKLHDKAVQKINPQI</sequence>
<organism>
    <name type="scientific">Cupriavidus pinatubonensis (strain JMP 134 / LMG 1197)</name>
    <name type="common">Cupriavidus necator (strain JMP 134)</name>
    <dbReference type="NCBI Taxonomy" id="264198"/>
    <lineage>
        <taxon>Bacteria</taxon>
        <taxon>Pseudomonadati</taxon>
        <taxon>Pseudomonadota</taxon>
        <taxon>Betaproteobacteria</taxon>
        <taxon>Burkholderiales</taxon>
        <taxon>Burkholderiaceae</taxon>
        <taxon>Cupriavidus</taxon>
    </lineage>
</organism>
<reference key="1">
    <citation type="journal article" date="2010" name="PLoS ONE">
        <title>The complete multipartite genome sequence of Cupriavidus necator JMP134, a versatile pollutant degrader.</title>
        <authorList>
            <person name="Lykidis A."/>
            <person name="Perez-Pantoja D."/>
            <person name="Ledger T."/>
            <person name="Mavromatis K."/>
            <person name="Anderson I.J."/>
            <person name="Ivanova N.N."/>
            <person name="Hooper S.D."/>
            <person name="Lapidus A."/>
            <person name="Lucas S."/>
            <person name="Gonzalez B."/>
            <person name="Kyrpides N.C."/>
        </authorList>
    </citation>
    <scope>NUCLEOTIDE SEQUENCE [LARGE SCALE GENOMIC DNA]</scope>
    <source>
        <strain>JMP134 / LMG 1197</strain>
    </source>
</reference>
<name>LEU1_CUPPJ</name>
<feature type="chain" id="PRO_1000149253" description="2-isopropylmalate synthase">
    <location>
        <begin position="1"/>
        <end position="513"/>
    </location>
</feature>
<feature type="domain" description="Pyruvate carboxyltransferase" evidence="1">
    <location>
        <begin position="5"/>
        <end position="268"/>
    </location>
</feature>
<feature type="region of interest" description="Regulatory domain" evidence="1">
    <location>
        <begin position="394"/>
        <end position="513"/>
    </location>
</feature>
<feature type="binding site" evidence="1">
    <location>
        <position position="14"/>
    </location>
    <ligand>
        <name>Mn(2+)</name>
        <dbReference type="ChEBI" id="CHEBI:29035"/>
    </ligand>
</feature>
<feature type="binding site" evidence="1">
    <location>
        <position position="202"/>
    </location>
    <ligand>
        <name>Mn(2+)</name>
        <dbReference type="ChEBI" id="CHEBI:29035"/>
    </ligand>
</feature>
<feature type="binding site" evidence="1">
    <location>
        <position position="204"/>
    </location>
    <ligand>
        <name>Mn(2+)</name>
        <dbReference type="ChEBI" id="CHEBI:29035"/>
    </ligand>
</feature>
<feature type="binding site" evidence="1">
    <location>
        <position position="239"/>
    </location>
    <ligand>
        <name>Mn(2+)</name>
        <dbReference type="ChEBI" id="CHEBI:29035"/>
    </ligand>
</feature>
<proteinExistence type="inferred from homology"/>
<accession>Q473V1</accession>
<comment type="function">
    <text evidence="1">Catalyzes the condensation of the acetyl group of acetyl-CoA with 3-methyl-2-oxobutanoate (2-ketoisovalerate) to form 3-carboxy-3-hydroxy-4-methylpentanoate (2-isopropylmalate).</text>
</comment>
<comment type="catalytic activity">
    <reaction evidence="1">
        <text>3-methyl-2-oxobutanoate + acetyl-CoA + H2O = (2S)-2-isopropylmalate + CoA + H(+)</text>
        <dbReference type="Rhea" id="RHEA:21524"/>
        <dbReference type="ChEBI" id="CHEBI:1178"/>
        <dbReference type="ChEBI" id="CHEBI:11851"/>
        <dbReference type="ChEBI" id="CHEBI:15377"/>
        <dbReference type="ChEBI" id="CHEBI:15378"/>
        <dbReference type="ChEBI" id="CHEBI:57287"/>
        <dbReference type="ChEBI" id="CHEBI:57288"/>
        <dbReference type="EC" id="2.3.3.13"/>
    </reaction>
</comment>
<comment type="cofactor">
    <cofactor evidence="1">
        <name>Mn(2+)</name>
        <dbReference type="ChEBI" id="CHEBI:29035"/>
    </cofactor>
</comment>
<comment type="pathway">
    <text evidence="1">Amino-acid biosynthesis; L-leucine biosynthesis; L-leucine from 3-methyl-2-oxobutanoate: step 1/4.</text>
</comment>
<comment type="subunit">
    <text evidence="1">Homodimer.</text>
</comment>
<comment type="subcellular location">
    <subcellularLocation>
        <location evidence="1">Cytoplasm</location>
    </subcellularLocation>
</comment>
<comment type="similarity">
    <text evidence="1">Belongs to the alpha-IPM synthase/homocitrate synthase family. LeuA type 1 subfamily.</text>
</comment>
<evidence type="ECO:0000255" key="1">
    <source>
        <dbReference type="HAMAP-Rule" id="MF_01025"/>
    </source>
</evidence>
<dbReference type="EC" id="2.3.3.13" evidence="1"/>
<dbReference type="EMBL" id="CP000090">
    <property type="protein sequence ID" value="AAZ60332.1"/>
    <property type="molecule type" value="Genomic_DNA"/>
</dbReference>
<dbReference type="SMR" id="Q473V1"/>
<dbReference type="STRING" id="264198.Reut_A0953"/>
<dbReference type="KEGG" id="reu:Reut_A0953"/>
<dbReference type="eggNOG" id="COG0119">
    <property type="taxonomic scope" value="Bacteria"/>
</dbReference>
<dbReference type="HOGENOM" id="CLU_022158_0_1_4"/>
<dbReference type="OrthoDB" id="9803573at2"/>
<dbReference type="UniPathway" id="UPA00048">
    <property type="reaction ID" value="UER00070"/>
</dbReference>
<dbReference type="GO" id="GO:0005829">
    <property type="term" value="C:cytosol"/>
    <property type="evidence" value="ECO:0007669"/>
    <property type="project" value="TreeGrafter"/>
</dbReference>
<dbReference type="GO" id="GO:0003852">
    <property type="term" value="F:2-isopropylmalate synthase activity"/>
    <property type="evidence" value="ECO:0007669"/>
    <property type="project" value="UniProtKB-UniRule"/>
</dbReference>
<dbReference type="GO" id="GO:0003985">
    <property type="term" value="F:acetyl-CoA C-acetyltransferase activity"/>
    <property type="evidence" value="ECO:0007669"/>
    <property type="project" value="UniProtKB-UniRule"/>
</dbReference>
<dbReference type="GO" id="GO:0030145">
    <property type="term" value="F:manganese ion binding"/>
    <property type="evidence" value="ECO:0007669"/>
    <property type="project" value="UniProtKB-UniRule"/>
</dbReference>
<dbReference type="GO" id="GO:0009098">
    <property type="term" value="P:L-leucine biosynthetic process"/>
    <property type="evidence" value="ECO:0007669"/>
    <property type="project" value="UniProtKB-UniRule"/>
</dbReference>
<dbReference type="CDD" id="cd07940">
    <property type="entry name" value="DRE_TIM_IPMS"/>
    <property type="match status" value="1"/>
</dbReference>
<dbReference type="FunFam" id="1.10.238.260:FF:000001">
    <property type="entry name" value="2-isopropylmalate synthase"/>
    <property type="match status" value="1"/>
</dbReference>
<dbReference type="FunFam" id="3.20.20.70:FF:000010">
    <property type="entry name" value="2-isopropylmalate synthase"/>
    <property type="match status" value="1"/>
</dbReference>
<dbReference type="FunFam" id="3.30.160.270:FF:000003">
    <property type="entry name" value="2-isopropylmalate synthase"/>
    <property type="match status" value="1"/>
</dbReference>
<dbReference type="Gene3D" id="1.10.238.260">
    <property type="match status" value="1"/>
</dbReference>
<dbReference type="Gene3D" id="3.30.160.270">
    <property type="match status" value="1"/>
</dbReference>
<dbReference type="Gene3D" id="3.20.20.70">
    <property type="entry name" value="Aldolase class I"/>
    <property type="match status" value="1"/>
</dbReference>
<dbReference type="HAMAP" id="MF_01025">
    <property type="entry name" value="LeuA_type1"/>
    <property type="match status" value="1"/>
</dbReference>
<dbReference type="InterPro" id="IPR050073">
    <property type="entry name" value="2-IPM_HCS-like"/>
</dbReference>
<dbReference type="InterPro" id="IPR013709">
    <property type="entry name" value="2-isopropylmalate_synth_dimer"/>
</dbReference>
<dbReference type="InterPro" id="IPR002034">
    <property type="entry name" value="AIPM/Hcit_synth_CS"/>
</dbReference>
<dbReference type="InterPro" id="IPR013785">
    <property type="entry name" value="Aldolase_TIM"/>
</dbReference>
<dbReference type="InterPro" id="IPR054691">
    <property type="entry name" value="LeuA/HCS_post-cat"/>
</dbReference>
<dbReference type="InterPro" id="IPR036230">
    <property type="entry name" value="LeuA_allosteric_dom_sf"/>
</dbReference>
<dbReference type="InterPro" id="IPR005671">
    <property type="entry name" value="LeuA_bact_synth"/>
</dbReference>
<dbReference type="InterPro" id="IPR000891">
    <property type="entry name" value="PYR_CT"/>
</dbReference>
<dbReference type="NCBIfam" id="TIGR00973">
    <property type="entry name" value="leuA_bact"/>
    <property type="match status" value="1"/>
</dbReference>
<dbReference type="NCBIfam" id="NF002086">
    <property type="entry name" value="PRK00915.1-3"/>
    <property type="match status" value="1"/>
</dbReference>
<dbReference type="NCBIfam" id="NF002087">
    <property type="entry name" value="PRK00915.1-4"/>
    <property type="match status" value="1"/>
</dbReference>
<dbReference type="PANTHER" id="PTHR10277:SF9">
    <property type="entry name" value="2-ISOPROPYLMALATE SYNTHASE 1, CHLOROPLASTIC-RELATED"/>
    <property type="match status" value="1"/>
</dbReference>
<dbReference type="PANTHER" id="PTHR10277">
    <property type="entry name" value="HOMOCITRATE SYNTHASE-RELATED"/>
    <property type="match status" value="1"/>
</dbReference>
<dbReference type="Pfam" id="PF22617">
    <property type="entry name" value="HCS_D2"/>
    <property type="match status" value="1"/>
</dbReference>
<dbReference type="Pfam" id="PF00682">
    <property type="entry name" value="HMGL-like"/>
    <property type="match status" value="1"/>
</dbReference>
<dbReference type="Pfam" id="PF08502">
    <property type="entry name" value="LeuA_dimer"/>
    <property type="match status" value="1"/>
</dbReference>
<dbReference type="SMART" id="SM00917">
    <property type="entry name" value="LeuA_dimer"/>
    <property type="match status" value="1"/>
</dbReference>
<dbReference type="SUPFAM" id="SSF110921">
    <property type="entry name" value="2-isopropylmalate synthase LeuA, allosteric (dimerisation) domain"/>
    <property type="match status" value="1"/>
</dbReference>
<dbReference type="SUPFAM" id="SSF51569">
    <property type="entry name" value="Aldolase"/>
    <property type="match status" value="1"/>
</dbReference>
<dbReference type="PROSITE" id="PS00815">
    <property type="entry name" value="AIPM_HOMOCIT_SYNTH_1"/>
    <property type="match status" value="1"/>
</dbReference>
<dbReference type="PROSITE" id="PS00816">
    <property type="entry name" value="AIPM_HOMOCIT_SYNTH_2"/>
    <property type="match status" value="1"/>
</dbReference>
<dbReference type="PROSITE" id="PS50991">
    <property type="entry name" value="PYR_CT"/>
    <property type="match status" value="1"/>
</dbReference>